<proteinExistence type="inferred from homology"/>
<protein>
    <recommendedName>
        <fullName evidence="1">Large ribosomal subunit protein bL25</fullName>
    </recommendedName>
    <alternativeName>
        <fullName evidence="3">50S ribosomal protein L25</fullName>
    </alternativeName>
    <alternativeName>
        <fullName evidence="1">General stress protein CTC</fullName>
    </alternativeName>
</protein>
<accession>Q89DJ8</accession>
<name>RL25_BRADU</name>
<evidence type="ECO:0000255" key="1">
    <source>
        <dbReference type="HAMAP-Rule" id="MF_01334"/>
    </source>
</evidence>
<evidence type="ECO:0000256" key="2">
    <source>
        <dbReference type="SAM" id="MobiDB-lite"/>
    </source>
</evidence>
<evidence type="ECO:0000305" key="3"/>
<dbReference type="EMBL" id="BA000040">
    <property type="protein sequence ID" value="BAC52706.1"/>
    <property type="molecule type" value="Genomic_DNA"/>
</dbReference>
<dbReference type="RefSeq" id="NP_774081.1">
    <property type="nucleotide sequence ID" value="NC_004463.1"/>
</dbReference>
<dbReference type="RefSeq" id="WP_011090175.1">
    <property type="nucleotide sequence ID" value="NC_004463.1"/>
</dbReference>
<dbReference type="SMR" id="Q89DJ8"/>
<dbReference type="STRING" id="224911.AAV28_34895"/>
<dbReference type="EnsemblBacteria" id="BAC52706">
    <property type="protein sequence ID" value="BAC52706"/>
    <property type="gene ID" value="BAC52706"/>
</dbReference>
<dbReference type="GeneID" id="46494399"/>
<dbReference type="KEGG" id="bja:bll7441"/>
<dbReference type="PATRIC" id="fig|224911.44.peg.7540"/>
<dbReference type="eggNOG" id="COG1825">
    <property type="taxonomic scope" value="Bacteria"/>
</dbReference>
<dbReference type="HOGENOM" id="CLU_075939_0_0_5"/>
<dbReference type="InParanoid" id="Q89DJ8"/>
<dbReference type="OrthoDB" id="9806411at2"/>
<dbReference type="PhylomeDB" id="Q89DJ8"/>
<dbReference type="Proteomes" id="UP000002526">
    <property type="component" value="Chromosome"/>
</dbReference>
<dbReference type="GO" id="GO:0022625">
    <property type="term" value="C:cytosolic large ribosomal subunit"/>
    <property type="evidence" value="ECO:0000318"/>
    <property type="project" value="GO_Central"/>
</dbReference>
<dbReference type="GO" id="GO:0008097">
    <property type="term" value="F:5S rRNA binding"/>
    <property type="evidence" value="ECO:0000318"/>
    <property type="project" value="GO_Central"/>
</dbReference>
<dbReference type="GO" id="GO:0003735">
    <property type="term" value="F:structural constituent of ribosome"/>
    <property type="evidence" value="ECO:0007669"/>
    <property type="project" value="InterPro"/>
</dbReference>
<dbReference type="GO" id="GO:0006412">
    <property type="term" value="P:translation"/>
    <property type="evidence" value="ECO:0000318"/>
    <property type="project" value="GO_Central"/>
</dbReference>
<dbReference type="CDD" id="cd00495">
    <property type="entry name" value="Ribosomal_L25_TL5_CTC"/>
    <property type="match status" value="1"/>
</dbReference>
<dbReference type="FunFam" id="2.170.120.20:FF:000003">
    <property type="entry name" value="50S ribosomal protein L25"/>
    <property type="match status" value="1"/>
</dbReference>
<dbReference type="FunFam" id="2.40.240.10:FF:000026">
    <property type="entry name" value="50S ribosomal protein L25"/>
    <property type="match status" value="1"/>
</dbReference>
<dbReference type="Gene3D" id="2.170.120.20">
    <property type="entry name" value="Ribosomal protein L25, beta domain"/>
    <property type="match status" value="1"/>
</dbReference>
<dbReference type="Gene3D" id="2.40.240.10">
    <property type="entry name" value="Ribosomal Protein L25, Chain P"/>
    <property type="match status" value="1"/>
</dbReference>
<dbReference type="HAMAP" id="MF_01334">
    <property type="entry name" value="Ribosomal_bL25_CTC"/>
    <property type="match status" value="1"/>
</dbReference>
<dbReference type="InterPro" id="IPR020056">
    <property type="entry name" value="Rbsml_bL25/Gln-tRNA_synth_N"/>
</dbReference>
<dbReference type="InterPro" id="IPR011035">
    <property type="entry name" value="Ribosomal_bL25/Gln-tRNA_synth"/>
</dbReference>
<dbReference type="InterPro" id="IPR020057">
    <property type="entry name" value="Ribosomal_bL25_b-dom"/>
</dbReference>
<dbReference type="InterPro" id="IPR037121">
    <property type="entry name" value="Ribosomal_bL25_C"/>
</dbReference>
<dbReference type="InterPro" id="IPR001021">
    <property type="entry name" value="Ribosomal_bL25_long"/>
</dbReference>
<dbReference type="InterPro" id="IPR029751">
    <property type="entry name" value="Ribosomal_L25_dom"/>
</dbReference>
<dbReference type="InterPro" id="IPR001859">
    <property type="entry name" value="Ribosomal_P1/P2_euk"/>
</dbReference>
<dbReference type="InterPro" id="IPR020930">
    <property type="entry name" value="Ribosomal_uL5_bac-type"/>
</dbReference>
<dbReference type="NCBIfam" id="TIGR00731">
    <property type="entry name" value="bL25_bact_ctc"/>
    <property type="match status" value="1"/>
</dbReference>
<dbReference type="NCBIfam" id="NF004128">
    <property type="entry name" value="PRK05618.1-2"/>
    <property type="match status" value="1"/>
</dbReference>
<dbReference type="PANTHER" id="PTHR33284">
    <property type="entry name" value="RIBOSOMAL PROTEIN L25/GLN-TRNA SYNTHETASE, ANTI-CODON-BINDING DOMAIN-CONTAINING PROTEIN"/>
    <property type="match status" value="1"/>
</dbReference>
<dbReference type="PANTHER" id="PTHR33284:SF1">
    <property type="entry name" value="RIBOSOMAL PROTEIN L25_GLN-TRNA SYNTHETASE, ANTI-CODON-BINDING DOMAIN-CONTAINING PROTEIN"/>
    <property type="match status" value="1"/>
</dbReference>
<dbReference type="Pfam" id="PF01386">
    <property type="entry name" value="Ribosomal_L25p"/>
    <property type="match status" value="1"/>
</dbReference>
<dbReference type="Pfam" id="PF14693">
    <property type="entry name" value="Ribosomal_TL5_C"/>
    <property type="match status" value="1"/>
</dbReference>
<dbReference type="PRINTS" id="PR00456">
    <property type="entry name" value="RIBOSOMALP2"/>
</dbReference>
<dbReference type="SUPFAM" id="SSF50715">
    <property type="entry name" value="Ribosomal protein L25-like"/>
    <property type="match status" value="1"/>
</dbReference>
<gene>
    <name evidence="1" type="primary">rplY</name>
    <name evidence="1" type="synonym">ctc</name>
    <name type="ordered locus">bll7441</name>
</gene>
<organism>
    <name type="scientific">Bradyrhizobium diazoefficiens (strain JCM 10833 / BCRC 13528 / IAM 13628 / NBRC 14792 / USDA 110)</name>
    <dbReference type="NCBI Taxonomy" id="224911"/>
    <lineage>
        <taxon>Bacteria</taxon>
        <taxon>Pseudomonadati</taxon>
        <taxon>Pseudomonadota</taxon>
        <taxon>Alphaproteobacteria</taxon>
        <taxon>Hyphomicrobiales</taxon>
        <taxon>Nitrobacteraceae</taxon>
        <taxon>Bradyrhizobium</taxon>
    </lineage>
</organism>
<keyword id="KW-1185">Reference proteome</keyword>
<keyword id="KW-0687">Ribonucleoprotein</keyword>
<keyword id="KW-0689">Ribosomal protein</keyword>
<keyword id="KW-0694">RNA-binding</keyword>
<keyword id="KW-0699">rRNA-binding</keyword>
<sequence>MATTVKELKATARPKSGKGAARAERRAGRVPGVIYGNNQPPVTISIEDRELRQRILAGRFLTTLVDIDLEGKKHRVIPRDYHLDPVKDFPIHVDFMRLGEGATIRISVPLHVVKSEASPGVKRGGTVNIVAHAIELECGVESIPQYIEADVGSLEIGHSLHLSDVKLPAGVKALTREDATLVTIVPPSGYAEEQKAAAAAAAGGAAPAAAAPAAGAAAPAAAAPAAAAKAPAGGDKKK</sequence>
<reference key="1">
    <citation type="journal article" date="2002" name="DNA Res.">
        <title>Complete genomic sequence of nitrogen-fixing symbiotic bacterium Bradyrhizobium japonicum USDA110.</title>
        <authorList>
            <person name="Kaneko T."/>
            <person name="Nakamura Y."/>
            <person name="Sato S."/>
            <person name="Minamisawa K."/>
            <person name="Uchiumi T."/>
            <person name="Sasamoto S."/>
            <person name="Watanabe A."/>
            <person name="Idesawa K."/>
            <person name="Iriguchi M."/>
            <person name="Kawashima K."/>
            <person name="Kohara M."/>
            <person name="Matsumoto M."/>
            <person name="Shimpo S."/>
            <person name="Tsuruoka H."/>
            <person name="Wada T."/>
            <person name="Yamada M."/>
            <person name="Tabata S."/>
        </authorList>
    </citation>
    <scope>NUCLEOTIDE SEQUENCE [LARGE SCALE GENOMIC DNA]</scope>
    <source>
        <strain>JCM 10833 / BCRC 13528 / IAM 13628 / NBRC 14792 / USDA 110</strain>
    </source>
</reference>
<feature type="chain" id="PRO_0000181523" description="Large ribosomal subunit protein bL25">
    <location>
        <begin position="1"/>
        <end position="238"/>
    </location>
</feature>
<feature type="region of interest" description="Disordered" evidence="2">
    <location>
        <begin position="1"/>
        <end position="24"/>
    </location>
</feature>
<feature type="compositionally biased region" description="Basic and acidic residues" evidence="2">
    <location>
        <begin position="1"/>
        <end position="10"/>
    </location>
</feature>
<comment type="function">
    <text evidence="1">This is one of the proteins that binds to the 5S RNA in the ribosome where it forms part of the central protuberance.</text>
</comment>
<comment type="subunit">
    <text evidence="1">Part of the 50S ribosomal subunit; part of the 5S rRNA/L5/L18/L25 subcomplex. Contacts the 5S rRNA. Binds to the 5S rRNA independently of L5 and L18.</text>
</comment>
<comment type="similarity">
    <text evidence="1">Belongs to the bacterial ribosomal protein bL25 family. CTC subfamily.</text>
</comment>